<name>RPOC_CLASE</name>
<accession>B0RB26</accession>
<comment type="function">
    <text evidence="1">DNA-dependent RNA polymerase catalyzes the transcription of DNA into RNA using the four ribonucleoside triphosphates as substrates.</text>
</comment>
<comment type="catalytic activity">
    <reaction evidence="1">
        <text>RNA(n) + a ribonucleoside 5'-triphosphate = RNA(n+1) + diphosphate</text>
        <dbReference type="Rhea" id="RHEA:21248"/>
        <dbReference type="Rhea" id="RHEA-COMP:14527"/>
        <dbReference type="Rhea" id="RHEA-COMP:17342"/>
        <dbReference type="ChEBI" id="CHEBI:33019"/>
        <dbReference type="ChEBI" id="CHEBI:61557"/>
        <dbReference type="ChEBI" id="CHEBI:140395"/>
        <dbReference type="EC" id="2.7.7.6"/>
    </reaction>
</comment>
<comment type="cofactor">
    <cofactor evidence="1">
        <name>Mg(2+)</name>
        <dbReference type="ChEBI" id="CHEBI:18420"/>
    </cofactor>
    <text evidence="1">Binds 1 Mg(2+) ion per subunit.</text>
</comment>
<comment type="cofactor">
    <cofactor evidence="1">
        <name>Zn(2+)</name>
        <dbReference type="ChEBI" id="CHEBI:29105"/>
    </cofactor>
    <text evidence="1">Binds 2 Zn(2+) ions per subunit.</text>
</comment>
<comment type="subunit">
    <text evidence="1">The RNAP catalytic core consists of 2 alpha, 1 beta, 1 beta' and 1 omega subunit. When a sigma factor is associated with the core the holoenzyme is formed, which can initiate transcription.</text>
</comment>
<comment type="similarity">
    <text evidence="1">Belongs to the RNA polymerase beta' chain family.</text>
</comment>
<organism>
    <name type="scientific">Clavibacter sepedonicus</name>
    <name type="common">Clavibacter michiganensis subsp. sepedonicus</name>
    <dbReference type="NCBI Taxonomy" id="31964"/>
    <lineage>
        <taxon>Bacteria</taxon>
        <taxon>Bacillati</taxon>
        <taxon>Actinomycetota</taxon>
        <taxon>Actinomycetes</taxon>
        <taxon>Micrococcales</taxon>
        <taxon>Microbacteriaceae</taxon>
        <taxon>Clavibacter</taxon>
    </lineage>
</organism>
<evidence type="ECO:0000255" key="1">
    <source>
        <dbReference type="HAMAP-Rule" id="MF_01322"/>
    </source>
</evidence>
<evidence type="ECO:0000256" key="2">
    <source>
        <dbReference type="SAM" id="MobiDB-lite"/>
    </source>
</evidence>
<protein>
    <recommendedName>
        <fullName evidence="1">DNA-directed RNA polymerase subunit beta'</fullName>
        <shortName evidence="1">RNAP subunit beta'</shortName>
        <ecNumber evidence="1">2.7.7.6</ecNumber>
    </recommendedName>
    <alternativeName>
        <fullName evidence="1">RNA polymerase subunit beta'</fullName>
    </alternativeName>
    <alternativeName>
        <fullName evidence="1">Transcriptase subunit beta'</fullName>
    </alternativeName>
</protein>
<sequence>MLDVTTFDELRIGLATADDIRRWSHGEVKKPETINYRTLKPEKDGLFGEQIFGPSRDWECSCGKYKRVRFKGIVCERCGVEVTKSAVRRERMGHIELAAPVTHIWYFKGVPSRLGYLLDMAPKDLEKVIYFAAYMVISVDEDARHEDMPGLENELRLEIKTLQDQRDSQIAERLGRLETDLAALEAEGAKSDQKRRAKDGAEKEMGQTRKAFDEDISRLERVWEEFRSLKVGELKPEDAVFHELQDRFGIYFEAHMGAEAIQKRLEAFDLEAEGELLREQIATGKGQKKIRAIKRLRVVSSFLATGNSPAAMVLQVVPVIPPELRPMVQLDGGRFATSDLNDLYRRVINRNNRLRRLLDLGAPEIIVNNEKRMLQEAVDALFDNGRRGRPVTGTGNRALKSLSDMLKGKQGRFRQNLLGKRVDYSGRSVIIVGPQLKLHQCGLPKQMALELFKPFVIKRLIDLSHAQNIKAAKRMVERSRGQVWDVLEEIIRERPVLLNRAPTLHRLGIQAFEPQLVEGKAIQLHPLVCAAFNADFDGDQMAVHLPLSVEAQAEARILMLASNNILKPSDGRPVTLPTQDMIIGLHHLTTLKEGVAGEGRAFSSVAEAILAKDQLSLDLNAKVRIRLHDIYFGEGEAPEGVELDEKGKTVGPVLLETTLGRALFNETLPVDYPYIEAVADKGKLSEIVNDLAERYPKVEVAAALDRIKDAGFYWATRSGVTVALSDVLTPPTKAAILSGYEKQAAKVQGQFEKGLTTNAERRQELIEIWNKATAEVAKAMEDNLPADNNINRMVSSGARGNWMQVRQIAGMRGLVSNPKGEIIPRPIVHSYREGLTVAEYFISTHGARKGLADTALRTADSGYLTRRLVDVSQDVIIREDDCGTSRGLDLPIATKGADGSSVRDSNVENSVYARSLAADAVNEAGEVVAPAGSDVGDVMIDHLIAAGVHEIKVRSVLTCESAVGVCAACYGRSLATGKLVDIGEVVGIIAAQSIGEPGTQLTMRTFHTGGVASADDITQGLPRVQELFEARTPKGASPIAEAAGRITIEDTDRSRKVILTPDNGDEPHIYPVLKRATLLVEDGQHVELGQQLHVGAIDPKEVLRVKGVREVQKHLVGGVQGVYRSQGVPIHDKHIEVIVRQMLRKVTVVEHGDTDLLPGELVDRARYNEVNRATLTEGKKTASARQEVMGITKASLATESWLSAASFQETTRVLTQAAMEGKSDPLMGLKENVIIGKLIPAGTGLAKYRDVTVTATEEAKAERYPNRIFTDESVFNESDLSFVDFDSFSSDDYTPGTYN</sequence>
<reference key="1">
    <citation type="journal article" date="2008" name="J. Bacteriol.">
        <title>Genome of the actinomycete plant pathogen Clavibacter michiganensis subsp. sepedonicus suggests recent niche adaptation.</title>
        <authorList>
            <person name="Bentley S.D."/>
            <person name="Corton C."/>
            <person name="Brown S.E."/>
            <person name="Barron A."/>
            <person name="Clark L."/>
            <person name="Doggett J."/>
            <person name="Harris B."/>
            <person name="Ormond D."/>
            <person name="Quail M.A."/>
            <person name="May G."/>
            <person name="Francis D."/>
            <person name="Knudson D."/>
            <person name="Parkhill J."/>
            <person name="Ishimaru C.A."/>
        </authorList>
    </citation>
    <scope>NUCLEOTIDE SEQUENCE [LARGE SCALE GENOMIC DNA]</scope>
    <source>
        <strain>ATCC 33113 / DSM 20744 / JCM 9667 / LMG 2889 / ICMP 2535 / C-1</strain>
    </source>
</reference>
<gene>
    <name evidence="1" type="primary">rpoC</name>
    <name type="ordered locus">CMS0270</name>
</gene>
<dbReference type="EC" id="2.7.7.6" evidence="1"/>
<dbReference type="EMBL" id="AM849034">
    <property type="protein sequence ID" value="CAQ00391.1"/>
    <property type="molecule type" value="Genomic_DNA"/>
</dbReference>
<dbReference type="RefSeq" id="WP_012297743.1">
    <property type="nucleotide sequence ID" value="NZ_MZMN01000003.1"/>
</dbReference>
<dbReference type="SMR" id="B0RB26"/>
<dbReference type="STRING" id="31964.CMS0270"/>
<dbReference type="KEGG" id="cms:CMS0270"/>
<dbReference type="eggNOG" id="COG0086">
    <property type="taxonomic scope" value="Bacteria"/>
</dbReference>
<dbReference type="HOGENOM" id="CLU_000524_3_1_11"/>
<dbReference type="OrthoDB" id="9815296at2"/>
<dbReference type="Proteomes" id="UP000001318">
    <property type="component" value="Chromosome"/>
</dbReference>
<dbReference type="GO" id="GO:0000428">
    <property type="term" value="C:DNA-directed RNA polymerase complex"/>
    <property type="evidence" value="ECO:0007669"/>
    <property type="project" value="UniProtKB-KW"/>
</dbReference>
<dbReference type="GO" id="GO:0003677">
    <property type="term" value="F:DNA binding"/>
    <property type="evidence" value="ECO:0007669"/>
    <property type="project" value="UniProtKB-UniRule"/>
</dbReference>
<dbReference type="GO" id="GO:0003899">
    <property type="term" value="F:DNA-directed RNA polymerase activity"/>
    <property type="evidence" value="ECO:0007669"/>
    <property type="project" value="UniProtKB-UniRule"/>
</dbReference>
<dbReference type="GO" id="GO:0000287">
    <property type="term" value="F:magnesium ion binding"/>
    <property type="evidence" value="ECO:0007669"/>
    <property type="project" value="UniProtKB-UniRule"/>
</dbReference>
<dbReference type="GO" id="GO:0008270">
    <property type="term" value="F:zinc ion binding"/>
    <property type="evidence" value="ECO:0007669"/>
    <property type="project" value="UniProtKB-UniRule"/>
</dbReference>
<dbReference type="GO" id="GO:0006351">
    <property type="term" value="P:DNA-templated transcription"/>
    <property type="evidence" value="ECO:0007669"/>
    <property type="project" value="UniProtKB-UniRule"/>
</dbReference>
<dbReference type="CDD" id="cd02655">
    <property type="entry name" value="RNAP_beta'_C"/>
    <property type="match status" value="1"/>
</dbReference>
<dbReference type="CDD" id="cd01609">
    <property type="entry name" value="RNAP_beta'_N"/>
    <property type="match status" value="1"/>
</dbReference>
<dbReference type="FunFam" id="1.10.150.390:FF:000002">
    <property type="entry name" value="DNA-directed RNA polymerase subunit beta"/>
    <property type="match status" value="1"/>
</dbReference>
<dbReference type="FunFam" id="1.10.40.90:FF:000001">
    <property type="entry name" value="DNA-directed RNA polymerase subunit beta"/>
    <property type="match status" value="1"/>
</dbReference>
<dbReference type="FunFam" id="4.10.860.120:FF:000001">
    <property type="entry name" value="DNA-directed RNA polymerase subunit beta"/>
    <property type="match status" value="1"/>
</dbReference>
<dbReference type="Gene3D" id="1.10.132.30">
    <property type="match status" value="1"/>
</dbReference>
<dbReference type="Gene3D" id="1.10.150.390">
    <property type="match status" value="1"/>
</dbReference>
<dbReference type="Gene3D" id="1.10.1790.20">
    <property type="match status" value="1"/>
</dbReference>
<dbReference type="Gene3D" id="1.10.40.90">
    <property type="match status" value="1"/>
</dbReference>
<dbReference type="Gene3D" id="2.40.40.20">
    <property type="match status" value="1"/>
</dbReference>
<dbReference type="Gene3D" id="2.40.50.100">
    <property type="match status" value="1"/>
</dbReference>
<dbReference type="Gene3D" id="4.10.860.120">
    <property type="entry name" value="RNA polymerase II, clamp domain"/>
    <property type="match status" value="1"/>
</dbReference>
<dbReference type="Gene3D" id="1.10.274.100">
    <property type="entry name" value="RNA polymerase Rpb1, domain 3"/>
    <property type="match status" value="1"/>
</dbReference>
<dbReference type="HAMAP" id="MF_01322">
    <property type="entry name" value="RNApol_bact_RpoC"/>
    <property type="match status" value="1"/>
</dbReference>
<dbReference type="InterPro" id="IPR045867">
    <property type="entry name" value="DNA-dir_RpoC_beta_prime"/>
</dbReference>
<dbReference type="InterPro" id="IPR012754">
    <property type="entry name" value="DNA-dir_RpoC_beta_prime_bact"/>
</dbReference>
<dbReference type="InterPro" id="IPR000722">
    <property type="entry name" value="RNA_pol_asu"/>
</dbReference>
<dbReference type="InterPro" id="IPR006592">
    <property type="entry name" value="RNA_pol_N"/>
</dbReference>
<dbReference type="InterPro" id="IPR007080">
    <property type="entry name" value="RNA_pol_Rpb1_1"/>
</dbReference>
<dbReference type="InterPro" id="IPR007066">
    <property type="entry name" value="RNA_pol_Rpb1_3"/>
</dbReference>
<dbReference type="InterPro" id="IPR042102">
    <property type="entry name" value="RNA_pol_Rpb1_3_sf"/>
</dbReference>
<dbReference type="InterPro" id="IPR007083">
    <property type="entry name" value="RNA_pol_Rpb1_4"/>
</dbReference>
<dbReference type="InterPro" id="IPR007081">
    <property type="entry name" value="RNA_pol_Rpb1_5"/>
</dbReference>
<dbReference type="InterPro" id="IPR044893">
    <property type="entry name" value="RNA_pol_Rpb1_clamp_domain"/>
</dbReference>
<dbReference type="InterPro" id="IPR038120">
    <property type="entry name" value="Rpb1_funnel_sf"/>
</dbReference>
<dbReference type="NCBIfam" id="NF011498">
    <property type="entry name" value="PRK14906.1"/>
    <property type="match status" value="1"/>
</dbReference>
<dbReference type="NCBIfam" id="TIGR02386">
    <property type="entry name" value="rpoC_TIGR"/>
    <property type="match status" value="1"/>
</dbReference>
<dbReference type="PANTHER" id="PTHR19376">
    <property type="entry name" value="DNA-DIRECTED RNA POLYMERASE"/>
    <property type="match status" value="1"/>
</dbReference>
<dbReference type="PANTHER" id="PTHR19376:SF54">
    <property type="entry name" value="DNA-DIRECTED RNA POLYMERASE SUBUNIT BETA"/>
    <property type="match status" value="1"/>
</dbReference>
<dbReference type="Pfam" id="PF04997">
    <property type="entry name" value="RNA_pol_Rpb1_1"/>
    <property type="match status" value="1"/>
</dbReference>
<dbReference type="Pfam" id="PF00623">
    <property type="entry name" value="RNA_pol_Rpb1_2"/>
    <property type="match status" value="2"/>
</dbReference>
<dbReference type="Pfam" id="PF04983">
    <property type="entry name" value="RNA_pol_Rpb1_3"/>
    <property type="match status" value="1"/>
</dbReference>
<dbReference type="Pfam" id="PF05000">
    <property type="entry name" value="RNA_pol_Rpb1_4"/>
    <property type="match status" value="1"/>
</dbReference>
<dbReference type="Pfam" id="PF04998">
    <property type="entry name" value="RNA_pol_Rpb1_5"/>
    <property type="match status" value="1"/>
</dbReference>
<dbReference type="SMART" id="SM00663">
    <property type="entry name" value="RPOLA_N"/>
    <property type="match status" value="1"/>
</dbReference>
<dbReference type="SUPFAM" id="SSF64484">
    <property type="entry name" value="beta and beta-prime subunits of DNA dependent RNA-polymerase"/>
    <property type="match status" value="1"/>
</dbReference>
<feature type="chain" id="PRO_1000086395" description="DNA-directed RNA polymerase subunit beta'">
    <location>
        <begin position="1"/>
        <end position="1299"/>
    </location>
</feature>
<feature type="region of interest" description="Disordered" evidence="2">
    <location>
        <begin position="188"/>
        <end position="209"/>
    </location>
</feature>
<feature type="binding site" evidence="1">
    <location>
        <position position="60"/>
    </location>
    <ligand>
        <name>Zn(2+)</name>
        <dbReference type="ChEBI" id="CHEBI:29105"/>
        <label>1</label>
    </ligand>
</feature>
<feature type="binding site" evidence="1">
    <location>
        <position position="62"/>
    </location>
    <ligand>
        <name>Zn(2+)</name>
        <dbReference type="ChEBI" id="CHEBI:29105"/>
        <label>1</label>
    </ligand>
</feature>
<feature type="binding site" evidence="1">
    <location>
        <position position="75"/>
    </location>
    <ligand>
        <name>Zn(2+)</name>
        <dbReference type="ChEBI" id="CHEBI:29105"/>
        <label>1</label>
    </ligand>
</feature>
<feature type="binding site" evidence="1">
    <location>
        <position position="78"/>
    </location>
    <ligand>
        <name>Zn(2+)</name>
        <dbReference type="ChEBI" id="CHEBI:29105"/>
        <label>1</label>
    </ligand>
</feature>
<feature type="binding site" evidence="1">
    <location>
        <position position="535"/>
    </location>
    <ligand>
        <name>Mg(2+)</name>
        <dbReference type="ChEBI" id="CHEBI:18420"/>
    </ligand>
</feature>
<feature type="binding site" evidence="1">
    <location>
        <position position="537"/>
    </location>
    <ligand>
        <name>Mg(2+)</name>
        <dbReference type="ChEBI" id="CHEBI:18420"/>
    </ligand>
</feature>
<feature type="binding site" evidence="1">
    <location>
        <position position="539"/>
    </location>
    <ligand>
        <name>Mg(2+)</name>
        <dbReference type="ChEBI" id="CHEBI:18420"/>
    </ligand>
</feature>
<feature type="binding site" evidence="1">
    <location>
        <position position="882"/>
    </location>
    <ligand>
        <name>Zn(2+)</name>
        <dbReference type="ChEBI" id="CHEBI:29105"/>
        <label>2</label>
    </ligand>
</feature>
<feature type="binding site" evidence="1">
    <location>
        <position position="959"/>
    </location>
    <ligand>
        <name>Zn(2+)</name>
        <dbReference type="ChEBI" id="CHEBI:29105"/>
        <label>2</label>
    </ligand>
</feature>
<feature type="binding site" evidence="1">
    <location>
        <position position="966"/>
    </location>
    <ligand>
        <name>Zn(2+)</name>
        <dbReference type="ChEBI" id="CHEBI:29105"/>
        <label>2</label>
    </ligand>
</feature>
<feature type="binding site" evidence="1">
    <location>
        <position position="969"/>
    </location>
    <ligand>
        <name>Zn(2+)</name>
        <dbReference type="ChEBI" id="CHEBI:29105"/>
        <label>2</label>
    </ligand>
</feature>
<keyword id="KW-0240">DNA-directed RNA polymerase</keyword>
<keyword id="KW-0460">Magnesium</keyword>
<keyword id="KW-0479">Metal-binding</keyword>
<keyword id="KW-0548">Nucleotidyltransferase</keyword>
<keyword id="KW-0804">Transcription</keyword>
<keyword id="KW-0808">Transferase</keyword>
<keyword id="KW-0862">Zinc</keyword>
<proteinExistence type="inferred from homology"/>